<protein>
    <recommendedName>
        <fullName evidence="1">1-deoxy-D-xylulose-5-phosphate synthase</fullName>
        <ecNumber evidence="1">2.2.1.7</ecNumber>
    </recommendedName>
    <alternativeName>
        <fullName evidence="1">1-deoxyxylulose-5-phosphate synthase</fullName>
        <shortName evidence="1">DXP synthase</shortName>
        <shortName evidence="1">DXPS</shortName>
    </alternativeName>
</protein>
<organism>
    <name type="scientific">Ralstonia pickettii (strain 12J)</name>
    <dbReference type="NCBI Taxonomy" id="402626"/>
    <lineage>
        <taxon>Bacteria</taxon>
        <taxon>Pseudomonadati</taxon>
        <taxon>Pseudomonadota</taxon>
        <taxon>Betaproteobacteria</taxon>
        <taxon>Burkholderiales</taxon>
        <taxon>Burkholderiaceae</taxon>
        <taxon>Ralstonia</taxon>
    </lineage>
</organism>
<name>DXS_RALPJ</name>
<proteinExistence type="inferred from homology"/>
<gene>
    <name evidence="1" type="primary">dxs</name>
    <name type="ordered locus">Rpic_2426</name>
</gene>
<dbReference type="EC" id="2.2.1.7" evidence="1"/>
<dbReference type="EMBL" id="CP001068">
    <property type="protein sequence ID" value="ACD27560.1"/>
    <property type="molecule type" value="Genomic_DNA"/>
</dbReference>
<dbReference type="SMR" id="B2U930"/>
<dbReference type="STRING" id="402626.Rpic_2426"/>
<dbReference type="KEGG" id="rpi:Rpic_2426"/>
<dbReference type="eggNOG" id="COG1154">
    <property type="taxonomic scope" value="Bacteria"/>
</dbReference>
<dbReference type="HOGENOM" id="CLU_009227_1_4_4"/>
<dbReference type="UniPathway" id="UPA00064">
    <property type="reaction ID" value="UER00091"/>
</dbReference>
<dbReference type="GO" id="GO:0005829">
    <property type="term" value="C:cytosol"/>
    <property type="evidence" value="ECO:0007669"/>
    <property type="project" value="TreeGrafter"/>
</dbReference>
<dbReference type="GO" id="GO:0008661">
    <property type="term" value="F:1-deoxy-D-xylulose-5-phosphate synthase activity"/>
    <property type="evidence" value="ECO:0007669"/>
    <property type="project" value="UniProtKB-UniRule"/>
</dbReference>
<dbReference type="GO" id="GO:0000287">
    <property type="term" value="F:magnesium ion binding"/>
    <property type="evidence" value="ECO:0007669"/>
    <property type="project" value="UniProtKB-UniRule"/>
</dbReference>
<dbReference type="GO" id="GO:0030976">
    <property type="term" value="F:thiamine pyrophosphate binding"/>
    <property type="evidence" value="ECO:0007669"/>
    <property type="project" value="UniProtKB-UniRule"/>
</dbReference>
<dbReference type="GO" id="GO:0052865">
    <property type="term" value="P:1-deoxy-D-xylulose 5-phosphate biosynthetic process"/>
    <property type="evidence" value="ECO:0007669"/>
    <property type="project" value="UniProtKB-UniPathway"/>
</dbReference>
<dbReference type="GO" id="GO:0019288">
    <property type="term" value="P:isopentenyl diphosphate biosynthetic process, methylerythritol 4-phosphate pathway"/>
    <property type="evidence" value="ECO:0007669"/>
    <property type="project" value="TreeGrafter"/>
</dbReference>
<dbReference type="GO" id="GO:0016114">
    <property type="term" value="P:terpenoid biosynthetic process"/>
    <property type="evidence" value="ECO:0007669"/>
    <property type="project" value="UniProtKB-UniRule"/>
</dbReference>
<dbReference type="GO" id="GO:0009228">
    <property type="term" value="P:thiamine biosynthetic process"/>
    <property type="evidence" value="ECO:0007669"/>
    <property type="project" value="UniProtKB-UniRule"/>
</dbReference>
<dbReference type="CDD" id="cd02007">
    <property type="entry name" value="TPP_DXS"/>
    <property type="match status" value="1"/>
</dbReference>
<dbReference type="CDD" id="cd07033">
    <property type="entry name" value="TPP_PYR_DXS_TK_like"/>
    <property type="match status" value="1"/>
</dbReference>
<dbReference type="FunFam" id="3.40.50.920:FF:000002">
    <property type="entry name" value="1-deoxy-D-xylulose-5-phosphate synthase"/>
    <property type="match status" value="1"/>
</dbReference>
<dbReference type="FunFam" id="3.40.50.970:FF:000005">
    <property type="entry name" value="1-deoxy-D-xylulose-5-phosphate synthase"/>
    <property type="match status" value="1"/>
</dbReference>
<dbReference type="Gene3D" id="3.40.50.920">
    <property type="match status" value="1"/>
</dbReference>
<dbReference type="Gene3D" id="3.40.50.970">
    <property type="match status" value="2"/>
</dbReference>
<dbReference type="HAMAP" id="MF_00315">
    <property type="entry name" value="DXP_synth"/>
    <property type="match status" value="1"/>
</dbReference>
<dbReference type="InterPro" id="IPR005477">
    <property type="entry name" value="Dxylulose-5-P_synthase"/>
</dbReference>
<dbReference type="InterPro" id="IPR029061">
    <property type="entry name" value="THDP-binding"/>
</dbReference>
<dbReference type="InterPro" id="IPR009014">
    <property type="entry name" value="Transketo_C/PFOR_II"/>
</dbReference>
<dbReference type="InterPro" id="IPR005475">
    <property type="entry name" value="Transketolase-like_Pyr-bd"/>
</dbReference>
<dbReference type="InterPro" id="IPR020826">
    <property type="entry name" value="Transketolase_BS"/>
</dbReference>
<dbReference type="InterPro" id="IPR033248">
    <property type="entry name" value="Transketolase_C"/>
</dbReference>
<dbReference type="InterPro" id="IPR049557">
    <property type="entry name" value="Transketolase_CS"/>
</dbReference>
<dbReference type="NCBIfam" id="TIGR00204">
    <property type="entry name" value="dxs"/>
    <property type="match status" value="1"/>
</dbReference>
<dbReference type="NCBIfam" id="NF003933">
    <property type="entry name" value="PRK05444.2-2"/>
    <property type="match status" value="1"/>
</dbReference>
<dbReference type="PANTHER" id="PTHR43322">
    <property type="entry name" value="1-D-DEOXYXYLULOSE 5-PHOSPHATE SYNTHASE-RELATED"/>
    <property type="match status" value="1"/>
</dbReference>
<dbReference type="PANTHER" id="PTHR43322:SF5">
    <property type="entry name" value="1-DEOXY-D-XYLULOSE-5-PHOSPHATE SYNTHASE, CHLOROPLASTIC"/>
    <property type="match status" value="1"/>
</dbReference>
<dbReference type="Pfam" id="PF13292">
    <property type="entry name" value="DXP_synthase_N"/>
    <property type="match status" value="1"/>
</dbReference>
<dbReference type="Pfam" id="PF02779">
    <property type="entry name" value="Transket_pyr"/>
    <property type="match status" value="1"/>
</dbReference>
<dbReference type="Pfam" id="PF02780">
    <property type="entry name" value="Transketolase_C"/>
    <property type="match status" value="1"/>
</dbReference>
<dbReference type="SMART" id="SM00861">
    <property type="entry name" value="Transket_pyr"/>
    <property type="match status" value="1"/>
</dbReference>
<dbReference type="SUPFAM" id="SSF52518">
    <property type="entry name" value="Thiamin diphosphate-binding fold (THDP-binding)"/>
    <property type="match status" value="2"/>
</dbReference>
<dbReference type="SUPFAM" id="SSF52922">
    <property type="entry name" value="TK C-terminal domain-like"/>
    <property type="match status" value="1"/>
</dbReference>
<dbReference type="PROSITE" id="PS00801">
    <property type="entry name" value="TRANSKETOLASE_1"/>
    <property type="match status" value="1"/>
</dbReference>
<dbReference type="PROSITE" id="PS00802">
    <property type="entry name" value="TRANSKETOLASE_2"/>
    <property type="match status" value="1"/>
</dbReference>
<accession>B2U930</accession>
<keyword id="KW-0414">Isoprene biosynthesis</keyword>
<keyword id="KW-0460">Magnesium</keyword>
<keyword id="KW-0479">Metal-binding</keyword>
<keyword id="KW-0784">Thiamine biosynthesis</keyword>
<keyword id="KW-0786">Thiamine pyrophosphate</keyword>
<keyword id="KW-0808">Transferase</keyword>
<sequence length="636" mass="68243">MTYELLNTIDDPADLRRLDRRQLGPLANELRAFVLDSVSQTGGHLSSNLGTVELTIALHYVFNTPEDRIVWDVGHQSYPHKILTGRRDQMGSLRQLDGISGFPRRSESPYDTFGTAHSSTSISAALGMALGAKTKGEDRVAIAVIGDGAMSAGMAFEAMNNAGVYKDLPLVVVLNDNDMSISPPVGALNRYLARLMSGQFYAATKKGVEKLLSVAPPVLEFAKRFEEHTKGMFVPATMFEEFGFNYIGPIDGHDLESLVPTLQNIRQRAREGGGPQFLHVVTKKGQGYKLAEADPILYHGPGKFNPQEGIKPSGRPAKVTYTQVFGQWLCDMAAADKRLVGITPAMREGSGMVEFEQRFPDRYYDVGIAEQHAVTFAGGLACEGLKPVVAIYSTFLQRGYDQLIHDVALQNLPVVFALDRAGLVGADGATHAGAYDIAYLRCIPNMMVMTPADENECRQLLSTAFAQDCPTAVRYPRGAGTGVTVQPTLEPLPVGKAEVRRTSTAPAGQRVAILAFGSMVAPASAAAERLDATVVNMRFVKPLDVACVLEMARTHDFVVTAEEGCVMGGAGSACLEALAAAGVATPVLQLGLPDRFVDHGDHAALLAQCGLDANGILASIRERFAVQPRAAAPRVA</sequence>
<comment type="function">
    <text evidence="1">Catalyzes the acyloin condensation reaction between C atoms 2 and 3 of pyruvate and glyceraldehyde 3-phosphate to yield 1-deoxy-D-xylulose-5-phosphate (DXP).</text>
</comment>
<comment type="catalytic activity">
    <reaction evidence="1">
        <text>D-glyceraldehyde 3-phosphate + pyruvate + H(+) = 1-deoxy-D-xylulose 5-phosphate + CO2</text>
        <dbReference type="Rhea" id="RHEA:12605"/>
        <dbReference type="ChEBI" id="CHEBI:15361"/>
        <dbReference type="ChEBI" id="CHEBI:15378"/>
        <dbReference type="ChEBI" id="CHEBI:16526"/>
        <dbReference type="ChEBI" id="CHEBI:57792"/>
        <dbReference type="ChEBI" id="CHEBI:59776"/>
        <dbReference type="EC" id="2.2.1.7"/>
    </reaction>
</comment>
<comment type="cofactor">
    <cofactor evidence="1">
        <name>Mg(2+)</name>
        <dbReference type="ChEBI" id="CHEBI:18420"/>
    </cofactor>
    <text evidence="1">Binds 1 Mg(2+) ion per subunit.</text>
</comment>
<comment type="cofactor">
    <cofactor evidence="1">
        <name>thiamine diphosphate</name>
        <dbReference type="ChEBI" id="CHEBI:58937"/>
    </cofactor>
    <text evidence="1">Binds 1 thiamine pyrophosphate per subunit.</text>
</comment>
<comment type="pathway">
    <text evidence="1">Metabolic intermediate biosynthesis; 1-deoxy-D-xylulose 5-phosphate biosynthesis; 1-deoxy-D-xylulose 5-phosphate from D-glyceraldehyde 3-phosphate and pyruvate: step 1/1.</text>
</comment>
<comment type="subunit">
    <text evidence="1">Homodimer.</text>
</comment>
<comment type="similarity">
    <text evidence="1">Belongs to the transketolase family. DXPS subfamily.</text>
</comment>
<feature type="chain" id="PRO_1000115759" description="1-deoxy-D-xylulose-5-phosphate synthase">
    <location>
        <begin position="1"/>
        <end position="636"/>
    </location>
</feature>
<feature type="binding site" evidence="1">
    <location>
        <position position="75"/>
    </location>
    <ligand>
        <name>thiamine diphosphate</name>
        <dbReference type="ChEBI" id="CHEBI:58937"/>
    </ligand>
</feature>
<feature type="binding site" evidence="1">
    <location>
        <begin position="116"/>
        <end position="118"/>
    </location>
    <ligand>
        <name>thiamine diphosphate</name>
        <dbReference type="ChEBI" id="CHEBI:58937"/>
    </ligand>
</feature>
<feature type="binding site" evidence="1">
    <location>
        <position position="147"/>
    </location>
    <ligand>
        <name>Mg(2+)</name>
        <dbReference type="ChEBI" id="CHEBI:18420"/>
    </ligand>
</feature>
<feature type="binding site" evidence="1">
    <location>
        <begin position="148"/>
        <end position="149"/>
    </location>
    <ligand>
        <name>thiamine diphosphate</name>
        <dbReference type="ChEBI" id="CHEBI:58937"/>
    </ligand>
</feature>
<feature type="binding site" evidence="1">
    <location>
        <position position="177"/>
    </location>
    <ligand>
        <name>Mg(2+)</name>
        <dbReference type="ChEBI" id="CHEBI:18420"/>
    </ligand>
</feature>
<feature type="binding site" evidence="1">
    <location>
        <position position="177"/>
    </location>
    <ligand>
        <name>thiamine diphosphate</name>
        <dbReference type="ChEBI" id="CHEBI:58937"/>
    </ligand>
</feature>
<feature type="binding site" evidence="1">
    <location>
        <position position="288"/>
    </location>
    <ligand>
        <name>thiamine diphosphate</name>
        <dbReference type="ChEBI" id="CHEBI:58937"/>
    </ligand>
</feature>
<feature type="binding site" evidence="1">
    <location>
        <position position="370"/>
    </location>
    <ligand>
        <name>thiamine diphosphate</name>
        <dbReference type="ChEBI" id="CHEBI:58937"/>
    </ligand>
</feature>
<reference key="1">
    <citation type="submission" date="2008-05" db="EMBL/GenBank/DDBJ databases">
        <title>Complete sequence of chromosome 1 of Ralstonia pickettii 12J.</title>
        <authorList>
            <person name="Lucas S."/>
            <person name="Copeland A."/>
            <person name="Lapidus A."/>
            <person name="Glavina del Rio T."/>
            <person name="Dalin E."/>
            <person name="Tice H."/>
            <person name="Bruce D."/>
            <person name="Goodwin L."/>
            <person name="Pitluck S."/>
            <person name="Meincke L."/>
            <person name="Brettin T."/>
            <person name="Detter J.C."/>
            <person name="Han C."/>
            <person name="Kuske C.R."/>
            <person name="Schmutz J."/>
            <person name="Larimer F."/>
            <person name="Land M."/>
            <person name="Hauser L."/>
            <person name="Kyrpides N."/>
            <person name="Mikhailova N."/>
            <person name="Marsh T."/>
            <person name="Richardson P."/>
        </authorList>
    </citation>
    <scope>NUCLEOTIDE SEQUENCE [LARGE SCALE GENOMIC DNA]</scope>
    <source>
        <strain>12J</strain>
    </source>
</reference>
<evidence type="ECO:0000255" key="1">
    <source>
        <dbReference type="HAMAP-Rule" id="MF_00315"/>
    </source>
</evidence>